<name>RNC2_ASPCL</name>
<gene>
    <name type="ORF">ACLA_055300</name>
</gene>
<keyword id="KW-0903">Direct protein sequencing</keyword>
<keyword id="KW-1015">Disulfide bond</keyword>
<keyword id="KW-0255">Endonuclease</keyword>
<keyword id="KW-0378">Hydrolase</keyword>
<keyword id="KW-0456">Lyase</keyword>
<keyword id="KW-0540">Nuclease</keyword>
<keyword id="KW-1185">Reference proteome</keyword>
<keyword id="KW-0964">Secreted</keyword>
<keyword id="KW-0732">Signal</keyword>
<evidence type="ECO:0000250" key="1"/>
<evidence type="ECO:0000269" key="2">
    <source ref="2"/>
</evidence>
<evidence type="ECO:0000305" key="3"/>
<feature type="signal peptide" evidence="2">
    <location>
        <begin position="1"/>
        <end position="26"/>
    </location>
</feature>
<feature type="chain" id="PRO_0000137369" description="Guanyl-specific ribonuclease C2">
    <location>
        <begin position="27"/>
        <end position="132"/>
    </location>
</feature>
<feature type="active site" evidence="1">
    <location>
        <position position="66"/>
    </location>
</feature>
<feature type="active site" description="Proton acceptor" evidence="1">
    <location>
        <position position="84"/>
    </location>
</feature>
<feature type="active site" description="Proton donor" evidence="1">
    <location>
        <position position="118"/>
    </location>
</feature>
<feature type="disulfide bond" evidence="1">
    <location>
        <begin position="28"/>
        <end position="36"/>
    </location>
</feature>
<feature type="disulfide bond" evidence="1">
    <location>
        <begin position="32"/>
        <end position="129"/>
    </location>
</feature>
<feature type="sequence conflict" description="In Ref. 2; AA sequence." evidence="3" ref="2">
    <original>Y</original>
    <variation>E</variation>
    <location>
        <position position="53"/>
    </location>
</feature>
<feature type="sequence conflict" description="In Ref. 2; AA sequence." evidence="3" ref="2">
    <original>S</original>
    <variation>G</variation>
    <location>
        <position position="98"/>
    </location>
</feature>
<feature type="sequence conflict" description="In Ref. 2; AA sequence." evidence="3" ref="2">
    <original>N</original>
    <variation>D</variation>
    <location>
        <position position="124"/>
    </location>
</feature>
<feature type="sequence conflict" description="In Ref. 2; AA sequence." evidence="3" ref="2">
    <original>SGW</original>
    <variation>Y</variation>
    <location>
        <begin position="130"/>
        <end position="132"/>
    </location>
</feature>
<protein>
    <recommendedName>
        <fullName>Guanyl-specific ribonuclease C2</fullName>
        <shortName>RNase C-2</shortName>
        <ecNumber>4.6.1.24</ecNumber>
    </recommendedName>
</protein>
<proteinExistence type="evidence at protein level"/>
<comment type="catalytic activity">
    <reaction>
        <text>[RNA] containing guanosine + H2O = an [RNA fragment]-3'-guanosine-3'-phosphate + a 5'-hydroxy-ribonucleotide-3'-[RNA fragment].</text>
        <dbReference type="EC" id="4.6.1.24"/>
    </reaction>
</comment>
<comment type="subcellular location">
    <subcellularLocation>
        <location>Secreted</location>
    </subcellularLocation>
</comment>
<comment type="similarity">
    <text evidence="3">Belongs to the ribonuclease N1/T1 family.</text>
</comment>
<comment type="sequence caution" evidence="3">
    <conflict type="erroneous gene model prediction">
        <sequence resource="EMBL-CDS" id="EAW13482"/>
    </conflict>
</comment>
<accession>P00652</accession>
<accession>A1C9F8</accession>
<dbReference type="EC" id="4.6.1.24"/>
<dbReference type="EMBL" id="DS027048">
    <property type="protein sequence ID" value="EAW13482.1"/>
    <property type="status" value="ALT_SEQ"/>
    <property type="molecule type" value="Genomic_DNA"/>
</dbReference>
<dbReference type="PIR" id="A00799">
    <property type="entry name" value="NRASTC"/>
</dbReference>
<dbReference type="RefSeq" id="XP_001274908.1">
    <property type="nucleotide sequence ID" value="XM_001274907.1"/>
</dbReference>
<dbReference type="SMR" id="P00652"/>
<dbReference type="EnsemblFungi" id="EAW13482">
    <property type="protein sequence ID" value="EAW13482"/>
    <property type="gene ID" value="ACLA_055300"/>
</dbReference>
<dbReference type="GeneID" id="4707141"/>
<dbReference type="KEGG" id="act:ACLA_055300"/>
<dbReference type="eggNOG" id="ENOG502SA4T">
    <property type="taxonomic scope" value="Eukaryota"/>
</dbReference>
<dbReference type="OrthoDB" id="5425539at2759"/>
<dbReference type="Proteomes" id="UP000006701">
    <property type="component" value="Unassembled WGS sequence"/>
</dbReference>
<dbReference type="GO" id="GO:0005576">
    <property type="term" value="C:extracellular region"/>
    <property type="evidence" value="ECO:0007669"/>
    <property type="project" value="UniProtKB-SubCell"/>
</dbReference>
<dbReference type="GO" id="GO:0016829">
    <property type="term" value="F:lyase activity"/>
    <property type="evidence" value="ECO:0007669"/>
    <property type="project" value="UniProtKB-KW"/>
</dbReference>
<dbReference type="GO" id="GO:0046589">
    <property type="term" value="F:ribonuclease T1 activity"/>
    <property type="evidence" value="ECO:0007669"/>
    <property type="project" value="UniProtKB-EC"/>
</dbReference>
<dbReference type="GO" id="GO:0003723">
    <property type="term" value="F:RNA binding"/>
    <property type="evidence" value="ECO:0007669"/>
    <property type="project" value="InterPro"/>
</dbReference>
<dbReference type="GO" id="GO:0004521">
    <property type="term" value="F:RNA endonuclease activity"/>
    <property type="evidence" value="ECO:0007669"/>
    <property type="project" value="InterPro"/>
</dbReference>
<dbReference type="CDD" id="cd00606">
    <property type="entry name" value="fungal_RNase"/>
    <property type="match status" value="1"/>
</dbReference>
<dbReference type="Gene3D" id="3.10.450.30">
    <property type="entry name" value="Microbial ribonucleases"/>
    <property type="match status" value="1"/>
</dbReference>
<dbReference type="InterPro" id="IPR000026">
    <property type="entry name" value="N1-like"/>
</dbReference>
<dbReference type="InterPro" id="IPR016191">
    <property type="entry name" value="Ribonuclease/ribotoxin"/>
</dbReference>
<dbReference type="InterPro" id="IPR051386">
    <property type="entry name" value="Ribonuclease_N1/T1"/>
</dbReference>
<dbReference type="PANTHER" id="PTHR42104">
    <property type="entry name" value="EXTRACELLULAR GUANYL-SPECIFIC RIBONUCLEASE RNTA (AFU_ORTHOLOGUE AFUA_4G03230)"/>
    <property type="match status" value="1"/>
</dbReference>
<dbReference type="PANTHER" id="PTHR42104:SF1">
    <property type="entry name" value="EXTRACELLULAR GUANYL-SPECIFIC RIBONUCLEASE RNTA (AFU_ORTHOLOGUE AFUA_4G03230)"/>
    <property type="match status" value="1"/>
</dbReference>
<dbReference type="Pfam" id="PF00545">
    <property type="entry name" value="Ribonuclease"/>
    <property type="match status" value="1"/>
</dbReference>
<dbReference type="SUPFAM" id="SSF53933">
    <property type="entry name" value="Microbial ribonucleases"/>
    <property type="match status" value="1"/>
</dbReference>
<reference key="1">
    <citation type="journal article" date="2008" name="PLoS Genet.">
        <title>Genomic islands in the pathogenic filamentous fungus Aspergillus fumigatus.</title>
        <authorList>
            <person name="Fedorova N.D."/>
            <person name="Khaldi N."/>
            <person name="Joardar V.S."/>
            <person name="Maiti R."/>
            <person name="Amedeo P."/>
            <person name="Anderson M.J."/>
            <person name="Crabtree J."/>
            <person name="Silva J.C."/>
            <person name="Badger J.H."/>
            <person name="Albarraq A."/>
            <person name="Angiuoli S."/>
            <person name="Bussey H."/>
            <person name="Bowyer P."/>
            <person name="Cotty P.J."/>
            <person name="Dyer P.S."/>
            <person name="Egan A."/>
            <person name="Galens K."/>
            <person name="Fraser-Liggett C.M."/>
            <person name="Haas B.J."/>
            <person name="Inman J.M."/>
            <person name="Kent R."/>
            <person name="Lemieux S."/>
            <person name="Malavazi I."/>
            <person name="Orvis J."/>
            <person name="Roemer T."/>
            <person name="Ronning C.M."/>
            <person name="Sundaram J.P."/>
            <person name="Sutton G."/>
            <person name="Turner G."/>
            <person name="Venter J.C."/>
            <person name="White O.R."/>
            <person name="Whitty B.R."/>
            <person name="Youngman P."/>
            <person name="Wolfe K.H."/>
            <person name="Goldman G.H."/>
            <person name="Wortman J.R."/>
            <person name="Jiang B."/>
            <person name="Denning D.W."/>
            <person name="Nierman W.C."/>
        </authorList>
    </citation>
    <scope>NUCLEOTIDE SEQUENCE [LARGE SCALE GENOMIC DNA]</scope>
    <source>
        <strain>ATCC 1007 / CBS 513.65 / DSM 816 / NCTC 3887 / NRRL 1 / QM 1276 / 107</strain>
    </source>
</reference>
<reference key="2">
    <citation type="journal article" date="1983" name="FEBS Lett.">
        <title>The complete amino acid sequence of ribonuclease C-2 from Aspergillus clavatus.</title>
        <authorList>
            <person name="Bezborodova S.I."/>
            <person name="Khodova O.M."/>
            <person name="Stepanov V.M."/>
        </authorList>
    </citation>
    <scope>PROTEIN SEQUENCE OF 27-130</scope>
</reference>
<organism>
    <name type="scientific">Aspergillus clavatus (strain ATCC 1007 / CBS 513.65 / DSM 816 / NCTC 3887 / NRRL 1 / QM 1276 / 107)</name>
    <dbReference type="NCBI Taxonomy" id="344612"/>
    <lineage>
        <taxon>Eukaryota</taxon>
        <taxon>Fungi</taxon>
        <taxon>Dikarya</taxon>
        <taxon>Ascomycota</taxon>
        <taxon>Pezizomycotina</taxon>
        <taxon>Eurotiomycetes</taxon>
        <taxon>Eurotiomycetidae</taxon>
        <taxon>Eurotiales</taxon>
        <taxon>Aspergillaceae</taxon>
        <taxon>Aspergillus</taxon>
        <taxon>Aspergillus subgen. Fumigati</taxon>
    </lineage>
</organism>
<sequence length="132" mass="14064">MLYNKLITIAALLVPALAAPQGLDVRDCDYTCGSHCYSASAVSDAQSAGYQLYSAGQSVGRSRYPHQYRNYEGFNFPVSGNYYEWPILSSGSTYNGGSPGADRVVFNDNDELAGLITHTGASGNGFVACSGW</sequence>